<comment type="function">
    <text evidence="1 4 5">Forms a channel through the mitochondrial outer membrane that allows diffusion of small hydrophilic molecules. The channel adopts an open conformation at low or zero membrane potential and a closed conformation at potentials above 30-40 mV. The open state has a weak anion selectivity whereas the closed state is cation-selective (By similarity). Involved in plant growth and development at the vegetative and reproductive stages. Is important for leaf and pollen development and mitochondrial membrane potential steady state. May be involved in ABA-mediated early seedling development and disease resistance.</text>
</comment>
<comment type="subcellular location">
    <subcellularLocation>
        <location evidence="3 5">Mitochondrion outer membrane</location>
    </subcellularLocation>
    <text>Also localized in other unidentified cellular compartments.</text>
</comment>
<comment type="alternative products">
    <event type="alternative splicing"/>
    <isoform>
        <id>Q9FJX3-1</id>
        <name>1</name>
        <sequence type="displayed"/>
    </isoform>
    <text>A number of isoforms are produced. According to EST sequences.</text>
</comment>
<comment type="tissue specificity">
    <text evidence="5">Expressed in root tips, steles, leaves, sepals, petals, stamen and pistils.</text>
</comment>
<comment type="induction">
    <text evidence="3 4">By the bacterial pathogen P.syringae pv. tomato. Down-regulated by abscisic acid (ABA).</text>
</comment>
<comment type="domain">
    <text>Consists mainly of membrane-spanning sided beta-sheets.</text>
</comment>
<comment type="disruption phenotype">
    <text evidence="5">Dwarf plants with lesion mimic phenotype and increased expression of the pathogenesis-related genes PR1, PR2 and PR5. Delayed flowering, impaired development of anthers and short siliques with sterile seeds.</text>
</comment>
<comment type="miscellaneous">
    <text>Plants silencing VDAC2 show an ABA-insensitive phenotype during early seedling development under ABA treatment.</text>
</comment>
<comment type="similarity">
    <text evidence="6">Belongs to the eukaryotic mitochondrial porin (TC 1.B.8.1) family.</text>
</comment>
<gene>
    <name type="primary">VDAC2</name>
    <name type="ordered locus">At5g67500</name>
    <name type="ORF">K9I9.6</name>
</gene>
<feature type="chain" id="PRO_0000414081" description="Mitochondrial outer membrane protein porin 2">
    <location>
        <begin position="1"/>
        <end position="276"/>
    </location>
</feature>
<feature type="modified residue" description="Phosphoserine" evidence="2">
    <location>
        <position position="76"/>
    </location>
</feature>
<feature type="modified residue" description="Phosphothreonine" evidence="7">
    <location>
        <position position="236"/>
    </location>
</feature>
<feature type="mutagenesis site" description="Alteration of subcellular localization." evidence="5">
    <original>H</original>
    <variation>P</variation>
    <location>
        <position position="223"/>
    </location>
</feature>
<organism>
    <name type="scientific">Arabidopsis thaliana</name>
    <name type="common">Mouse-ear cress</name>
    <dbReference type="NCBI Taxonomy" id="3702"/>
    <lineage>
        <taxon>Eukaryota</taxon>
        <taxon>Viridiplantae</taxon>
        <taxon>Streptophyta</taxon>
        <taxon>Embryophyta</taxon>
        <taxon>Tracheophyta</taxon>
        <taxon>Spermatophyta</taxon>
        <taxon>Magnoliopsida</taxon>
        <taxon>eudicotyledons</taxon>
        <taxon>Gunneridae</taxon>
        <taxon>Pentapetalae</taxon>
        <taxon>rosids</taxon>
        <taxon>malvids</taxon>
        <taxon>Brassicales</taxon>
        <taxon>Brassicaceae</taxon>
        <taxon>Camelineae</taxon>
        <taxon>Arabidopsis</taxon>
    </lineage>
</organism>
<protein>
    <recommendedName>
        <fullName>Mitochondrial outer membrane protein porin 2</fullName>
    </recommendedName>
    <alternativeName>
        <fullName>Voltage-dependent anion-selective channel protein 2</fullName>
        <shortName>AtVDAC2</shortName>
        <shortName>VDAC-2</shortName>
    </alternativeName>
</protein>
<reference key="1">
    <citation type="journal article" date="1998" name="DNA Res.">
        <title>Structural analysis of Arabidopsis thaliana chromosome 5. VI. Sequence features of the regions of 1,367,185 bp covered by 19 physically assigned P1 and TAC clones.</title>
        <authorList>
            <person name="Kotani H."/>
            <person name="Nakamura Y."/>
            <person name="Sato S."/>
            <person name="Asamizu E."/>
            <person name="Kaneko T."/>
            <person name="Miyajima N."/>
            <person name="Tabata S."/>
        </authorList>
    </citation>
    <scope>NUCLEOTIDE SEQUENCE [LARGE SCALE GENOMIC DNA]</scope>
    <source>
        <strain>cv. Columbia</strain>
    </source>
</reference>
<reference key="2">
    <citation type="journal article" date="2017" name="Plant J.">
        <title>Araport11: a complete reannotation of the Arabidopsis thaliana reference genome.</title>
        <authorList>
            <person name="Cheng C.Y."/>
            <person name="Krishnakumar V."/>
            <person name="Chan A.P."/>
            <person name="Thibaud-Nissen F."/>
            <person name="Schobel S."/>
            <person name="Town C.D."/>
        </authorList>
    </citation>
    <scope>GENOME REANNOTATION</scope>
    <source>
        <strain>cv. Columbia</strain>
    </source>
</reference>
<reference key="3">
    <citation type="submission" date="2006-06" db="EMBL/GenBank/DDBJ databases">
        <title>Arabidopsis ORF clones.</title>
        <authorList>
            <person name="Kim C.J."/>
            <person name="Chen H."/>
            <person name="Quinitio C."/>
            <person name="Shinn P."/>
            <person name="Ecker J.R."/>
        </authorList>
    </citation>
    <scope>NUCLEOTIDE SEQUENCE [LARGE SCALE MRNA]</scope>
    <source>
        <strain>cv. Columbia</strain>
    </source>
</reference>
<reference key="4">
    <citation type="submission" date="2002-03" db="EMBL/GenBank/DDBJ databases">
        <title>Full-length cDNA from Arabidopsis thaliana.</title>
        <authorList>
            <person name="Brover V.V."/>
            <person name="Troukhan M.E."/>
            <person name="Alexandrov N.A."/>
            <person name="Lu Y.-P."/>
            <person name="Flavell R.B."/>
            <person name="Feldmann K.A."/>
        </authorList>
    </citation>
    <scope>NUCLEOTIDE SEQUENCE [LARGE SCALE MRNA]</scope>
</reference>
<reference key="5">
    <citation type="journal article" date="2007" name="Mol. Cell. Proteomics">
        <title>Multidimensional protein identification technology (MudPIT) analysis of ubiquitinated proteins in plants.</title>
        <authorList>
            <person name="Maor R."/>
            <person name="Jones A."/>
            <person name="Nuehse T.S."/>
            <person name="Studholme D.J."/>
            <person name="Peck S.C."/>
            <person name="Shirasu K."/>
        </authorList>
    </citation>
    <scope>IDENTIFICATION BY MASS SPECTROMETRY [LARGE SCALE ANALYSIS]</scope>
    <source>
        <strain>cv. Landsberg erecta</strain>
    </source>
</reference>
<reference key="6">
    <citation type="journal article" date="2009" name="Int. J. Mol. Sci.">
        <title>Voltage-dependent anion channel 2 of Arabidopsis thaliana (AtVDAC2) is involved in ABA-mediated early seedling development.</title>
        <authorList>
            <person name="Yan J."/>
            <person name="He H."/>
            <person name="Tong S."/>
            <person name="Zhang W."/>
            <person name="Wang J."/>
            <person name="Li X."/>
            <person name="Yang Y."/>
        </authorList>
    </citation>
    <scope>FUNCTION</scope>
    <scope>INDUCTION</scope>
</reference>
<reference key="7">
    <citation type="journal article" date="2009" name="Mol. Cells">
        <title>Pathogen inducible voltage-dependent anion channel (AtVDAC) isoforms are localized to mitochondria membrane in Arabidopsis.</title>
        <authorList>
            <person name="Lee S.M."/>
            <person name="Hoang M.H."/>
            <person name="Han H.J."/>
            <person name="Kim H.S."/>
            <person name="Lee K."/>
            <person name="Kim K.E."/>
            <person name="Kim D.H."/>
            <person name="Lee S.Y."/>
            <person name="Chung W.S."/>
        </authorList>
    </citation>
    <scope>SUBCELLULAR LOCATION</scope>
    <scope>INDUCTION</scope>
</reference>
<reference key="8">
    <citation type="journal article" date="2011" name="J. Exp. Bot.">
        <title>Molecular and genetic characterization of the gene family encoding the voltage-dependent anion channel in Arabidopsis.</title>
        <authorList>
            <person name="Tateda C."/>
            <person name="Watanabe K."/>
            <person name="Kusano T."/>
            <person name="Takahashi Y."/>
        </authorList>
    </citation>
    <scope>FUNCTION</scope>
    <scope>SUBCELLULAR LOCATION</scope>
    <scope>TISSUE SPECIFICITY</scope>
    <scope>GENE FAMILY</scope>
    <scope>DISRUPTION PHENOTYPE</scope>
    <scope>MUTAGENESIS OF HIS-223</scope>
</reference>
<reference key="9">
    <citation type="journal article" date="2012" name="J. Proteome Res.">
        <title>Identification of phosphoproteins in Arabidopsis thaliana leaves using polyethylene glycol fractionation, immobilized metal-ion affinity chromatography, two-dimensional gel electrophoresis and mass spectrometry.</title>
        <authorList>
            <person name="Aryal U.K."/>
            <person name="Krochko J.E."/>
            <person name="Ross A.R."/>
        </authorList>
    </citation>
    <scope>PHOSPHORYLATION [LARGE SCALE ANALYSIS] AT THR-236</scope>
    <scope>IDENTIFICATION BY MASS SPECTROMETRY [LARGE SCALE ANALYSIS]</scope>
</reference>
<name>VDAC2_ARATH</name>
<dbReference type="EMBL" id="AB013390">
    <property type="protein sequence ID" value="BAB08458.1"/>
    <property type="molecule type" value="Genomic_DNA"/>
</dbReference>
<dbReference type="EMBL" id="CP002688">
    <property type="protein sequence ID" value="ANM69845.1"/>
    <property type="molecule type" value="Genomic_DNA"/>
</dbReference>
<dbReference type="EMBL" id="BT025802">
    <property type="protein sequence ID" value="ABF83692.1"/>
    <property type="molecule type" value="mRNA"/>
</dbReference>
<dbReference type="EMBL" id="AY085100">
    <property type="protein sequence ID" value="AAM61654.1"/>
    <property type="molecule type" value="mRNA"/>
</dbReference>
<dbReference type="RefSeq" id="NP_201551.1">
    <molecule id="Q9FJX3-1"/>
    <property type="nucleotide sequence ID" value="NM_126150.5"/>
</dbReference>
<dbReference type="SMR" id="Q9FJX3"/>
<dbReference type="BioGRID" id="22128">
    <property type="interactions" value="7"/>
</dbReference>
<dbReference type="FunCoup" id="Q9FJX3">
    <property type="interactions" value="3326"/>
</dbReference>
<dbReference type="STRING" id="3702.Q9FJX3"/>
<dbReference type="iPTMnet" id="Q9FJX3"/>
<dbReference type="PaxDb" id="3702-AT5G67500.2"/>
<dbReference type="ProteomicsDB" id="243194">
    <molecule id="Q9FJX3-1"/>
</dbReference>
<dbReference type="EnsemblPlants" id="AT5G67500.3">
    <molecule id="Q9FJX3-1"/>
    <property type="protein sequence ID" value="AT5G67500.3"/>
    <property type="gene ID" value="AT5G67500"/>
</dbReference>
<dbReference type="GeneID" id="836886"/>
<dbReference type="Gramene" id="AT5G67500.3">
    <molecule id="Q9FJX3-1"/>
    <property type="protein sequence ID" value="AT5G67500.3"/>
    <property type="gene ID" value="AT5G67500"/>
</dbReference>
<dbReference type="KEGG" id="ath:AT5G67500"/>
<dbReference type="Araport" id="AT5G67500"/>
<dbReference type="TAIR" id="AT5G67500">
    <property type="gene designation" value="VDAC2"/>
</dbReference>
<dbReference type="eggNOG" id="KOG3126">
    <property type="taxonomic scope" value="Eukaryota"/>
</dbReference>
<dbReference type="HOGENOM" id="CLU_069937_0_0_1"/>
<dbReference type="InParanoid" id="Q9FJX3"/>
<dbReference type="OMA" id="MAPPCYA"/>
<dbReference type="OrthoDB" id="7827681at2759"/>
<dbReference type="PhylomeDB" id="Q9FJX3"/>
<dbReference type="PRO" id="PR:Q9FJX3"/>
<dbReference type="Proteomes" id="UP000006548">
    <property type="component" value="Chromosome 5"/>
</dbReference>
<dbReference type="ExpressionAtlas" id="Q9FJX3">
    <property type="expression patterns" value="baseline and differential"/>
</dbReference>
<dbReference type="GO" id="GO:0005741">
    <property type="term" value="C:mitochondrial outer membrane"/>
    <property type="evidence" value="ECO:0007669"/>
    <property type="project" value="UniProtKB-SubCell"/>
</dbReference>
<dbReference type="GO" id="GO:0046930">
    <property type="term" value="C:pore complex"/>
    <property type="evidence" value="ECO:0007669"/>
    <property type="project" value="UniProtKB-KW"/>
</dbReference>
<dbReference type="GO" id="GO:0015288">
    <property type="term" value="F:porin activity"/>
    <property type="evidence" value="ECO:0007669"/>
    <property type="project" value="UniProtKB-KW"/>
</dbReference>
<dbReference type="GO" id="GO:0008308">
    <property type="term" value="F:voltage-gated monoatomic anion channel activity"/>
    <property type="evidence" value="ECO:0007669"/>
    <property type="project" value="InterPro"/>
</dbReference>
<dbReference type="CDD" id="cd07306">
    <property type="entry name" value="Porin3_VDAC"/>
    <property type="match status" value="1"/>
</dbReference>
<dbReference type="FunFam" id="2.40.160.10:FF:000003">
    <property type="entry name" value="Outer mitochondrial membrane protein porin"/>
    <property type="match status" value="1"/>
</dbReference>
<dbReference type="Gene3D" id="2.40.160.10">
    <property type="entry name" value="Porin"/>
    <property type="match status" value="1"/>
</dbReference>
<dbReference type="InterPro" id="IPR023614">
    <property type="entry name" value="Porin_dom_sf"/>
</dbReference>
<dbReference type="InterPro" id="IPR001925">
    <property type="entry name" value="Porin_Euk"/>
</dbReference>
<dbReference type="InterPro" id="IPR027246">
    <property type="entry name" value="Porin_Euk/Tom40"/>
</dbReference>
<dbReference type="PANTHER" id="PTHR11743:SF65">
    <property type="entry name" value="MITOCHONDRIAL OUTER MEMBRANE PROTEIN PORIN 2"/>
    <property type="match status" value="1"/>
</dbReference>
<dbReference type="PANTHER" id="PTHR11743">
    <property type="entry name" value="VOLTAGE-DEPENDENT ANION-SELECTIVE CHANNEL"/>
    <property type="match status" value="1"/>
</dbReference>
<dbReference type="Pfam" id="PF01459">
    <property type="entry name" value="Porin_3"/>
    <property type="match status" value="1"/>
</dbReference>
<proteinExistence type="evidence at protein level"/>
<evidence type="ECO:0000250" key="1"/>
<evidence type="ECO:0000250" key="2">
    <source>
        <dbReference type="UniProtKB" id="Q9SMX3"/>
    </source>
</evidence>
<evidence type="ECO:0000269" key="3">
    <source>
    </source>
</evidence>
<evidence type="ECO:0000269" key="4">
    <source>
    </source>
</evidence>
<evidence type="ECO:0000269" key="5">
    <source>
    </source>
</evidence>
<evidence type="ECO:0000305" key="6"/>
<evidence type="ECO:0007744" key="7">
    <source>
    </source>
</evidence>
<keyword id="KW-0025">Alternative splicing</keyword>
<keyword id="KW-0341">Growth regulation</keyword>
<keyword id="KW-0406">Ion transport</keyword>
<keyword id="KW-0472">Membrane</keyword>
<keyword id="KW-0496">Mitochondrion</keyword>
<keyword id="KW-1000">Mitochondrion outer membrane</keyword>
<keyword id="KW-0597">Phosphoprotein</keyword>
<keyword id="KW-0626">Porin</keyword>
<keyword id="KW-1185">Reference proteome</keyword>
<keyword id="KW-0812">Transmembrane</keyword>
<keyword id="KW-1134">Transmembrane beta strand</keyword>
<keyword id="KW-0813">Transport</keyword>
<sequence>MSKGPGLFTDIGKKAKDLLTRDYNSDQKFSISTYSASGVALTSTALKKGGVHAADVATQYKYKNALFDVKIDTDSSVLTTVTLTEILPSTKAIASFKVPDYNSAKLEVQYFHDHATVTAAAALKQNPLIDITATLGSPVISFGAEAGYDTTSKTFTKYNAGISVTKPDACLSIILGDKGDSLKASYLHHFDEFKRTAAVGEVYRKFSTNENTITVGGLYAIDHSTAVKAKLNNHGTLGALLQHEVLPRSLVTVSSEIDTKALEKHPRFGLSLALKP</sequence>
<accession>Q9FJX3</accession>